<feature type="chain" id="PRO_1000124112" description="1-deoxy-D-xylulose 5-phosphate reductoisomerase">
    <location>
        <begin position="1"/>
        <end position="394"/>
    </location>
</feature>
<feature type="binding site" evidence="1">
    <location>
        <position position="10"/>
    </location>
    <ligand>
        <name>NADPH</name>
        <dbReference type="ChEBI" id="CHEBI:57783"/>
    </ligand>
</feature>
<feature type="binding site" evidence="1">
    <location>
        <position position="11"/>
    </location>
    <ligand>
        <name>NADPH</name>
        <dbReference type="ChEBI" id="CHEBI:57783"/>
    </ligand>
</feature>
<feature type="binding site" evidence="1">
    <location>
        <position position="12"/>
    </location>
    <ligand>
        <name>NADPH</name>
        <dbReference type="ChEBI" id="CHEBI:57783"/>
    </ligand>
</feature>
<feature type="binding site" evidence="1">
    <location>
        <position position="13"/>
    </location>
    <ligand>
        <name>NADPH</name>
        <dbReference type="ChEBI" id="CHEBI:57783"/>
    </ligand>
</feature>
<feature type="binding site" evidence="1">
    <location>
        <position position="38"/>
    </location>
    <ligand>
        <name>NADPH</name>
        <dbReference type="ChEBI" id="CHEBI:57783"/>
    </ligand>
</feature>
<feature type="binding site" evidence="1">
    <location>
        <position position="39"/>
    </location>
    <ligand>
        <name>NADPH</name>
        <dbReference type="ChEBI" id="CHEBI:57783"/>
    </ligand>
</feature>
<feature type="binding site" evidence="1">
    <location>
        <position position="40"/>
    </location>
    <ligand>
        <name>NADPH</name>
        <dbReference type="ChEBI" id="CHEBI:57783"/>
    </ligand>
</feature>
<feature type="binding site" evidence="1">
    <location>
        <position position="123"/>
    </location>
    <ligand>
        <name>NADPH</name>
        <dbReference type="ChEBI" id="CHEBI:57783"/>
    </ligand>
</feature>
<feature type="binding site" evidence="1">
    <location>
        <position position="124"/>
    </location>
    <ligand>
        <name>1-deoxy-D-xylulose 5-phosphate</name>
        <dbReference type="ChEBI" id="CHEBI:57792"/>
    </ligand>
</feature>
<feature type="binding site" evidence="1">
    <location>
        <position position="125"/>
    </location>
    <ligand>
        <name>NADPH</name>
        <dbReference type="ChEBI" id="CHEBI:57783"/>
    </ligand>
</feature>
<feature type="binding site" evidence="1">
    <location>
        <position position="149"/>
    </location>
    <ligand>
        <name>Mn(2+)</name>
        <dbReference type="ChEBI" id="CHEBI:29035"/>
    </ligand>
</feature>
<feature type="binding site" evidence="1">
    <location>
        <position position="150"/>
    </location>
    <ligand>
        <name>1-deoxy-D-xylulose 5-phosphate</name>
        <dbReference type="ChEBI" id="CHEBI:57792"/>
    </ligand>
</feature>
<feature type="binding site" evidence="1">
    <location>
        <position position="151"/>
    </location>
    <ligand>
        <name>1-deoxy-D-xylulose 5-phosphate</name>
        <dbReference type="ChEBI" id="CHEBI:57792"/>
    </ligand>
</feature>
<feature type="binding site" evidence="1">
    <location>
        <position position="151"/>
    </location>
    <ligand>
        <name>Mn(2+)</name>
        <dbReference type="ChEBI" id="CHEBI:29035"/>
    </ligand>
</feature>
<feature type="binding site" evidence="1">
    <location>
        <position position="175"/>
    </location>
    <ligand>
        <name>1-deoxy-D-xylulose 5-phosphate</name>
        <dbReference type="ChEBI" id="CHEBI:57792"/>
    </ligand>
</feature>
<feature type="binding site" evidence="1">
    <location>
        <position position="198"/>
    </location>
    <ligand>
        <name>1-deoxy-D-xylulose 5-phosphate</name>
        <dbReference type="ChEBI" id="CHEBI:57792"/>
    </ligand>
</feature>
<feature type="binding site" evidence="1">
    <location>
        <position position="204"/>
    </location>
    <ligand>
        <name>NADPH</name>
        <dbReference type="ChEBI" id="CHEBI:57783"/>
    </ligand>
</feature>
<feature type="binding site" evidence="1">
    <location>
        <position position="211"/>
    </location>
    <ligand>
        <name>1-deoxy-D-xylulose 5-phosphate</name>
        <dbReference type="ChEBI" id="CHEBI:57792"/>
    </ligand>
</feature>
<feature type="binding site" evidence="1">
    <location>
        <position position="216"/>
    </location>
    <ligand>
        <name>1-deoxy-D-xylulose 5-phosphate</name>
        <dbReference type="ChEBI" id="CHEBI:57792"/>
    </ligand>
</feature>
<feature type="binding site" evidence="1">
    <location>
        <position position="217"/>
    </location>
    <ligand>
        <name>1-deoxy-D-xylulose 5-phosphate</name>
        <dbReference type="ChEBI" id="CHEBI:57792"/>
    </ligand>
</feature>
<feature type="binding site" evidence="1">
    <location>
        <position position="220"/>
    </location>
    <ligand>
        <name>1-deoxy-D-xylulose 5-phosphate</name>
        <dbReference type="ChEBI" id="CHEBI:57792"/>
    </ligand>
</feature>
<feature type="binding site" evidence="1">
    <location>
        <position position="220"/>
    </location>
    <ligand>
        <name>Mn(2+)</name>
        <dbReference type="ChEBI" id="CHEBI:29035"/>
    </ligand>
</feature>
<name>DXR_CERSK</name>
<evidence type="ECO:0000255" key="1">
    <source>
        <dbReference type="HAMAP-Rule" id="MF_00183"/>
    </source>
</evidence>
<gene>
    <name evidence="1" type="primary">dxr</name>
    <name type="ordered locus">RSKD131_1025</name>
</gene>
<dbReference type="EC" id="1.1.1.267" evidence="1"/>
<dbReference type="EMBL" id="CP001150">
    <property type="protein sequence ID" value="ACM00885.1"/>
    <property type="molecule type" value="Genomic_DNA"/>
</dbReference>
<dbReference type="RefSeq" id="WP_015920463.1">
    <property type="nucleotide sequence ID" value="NC_011963.1"/>
</dbReference>
<dbReference type="SMR" id="B9KRU3"/>
<dbReference type="GeneID" id="67446458"/>
<dbReference type="KEGG" id="rsk:RSKD131_1025"/>
<dbReference type="HOGENOM" id="CLU_035714_4_0_5"/>
<dbReference type="UniPathway" id="UPA00056">
    <property type="reaction ID" value="UER00092"/>
</dbReference>
<dbReference type="GO" id="GO:0030604">
    <property type="term" value="F:1-deoxy-D-xylulose-5-phosphate reductoisomerase activity"/>
    <property type="evidence" value="ECO:0007669"/>
    <property type="project" value="UniProtKB-UniRule"/>
</dbReference>
<dbReference type="GO" id="GO:0030145">
    <property type="term" value="F:manganese ion binding"/>
    <property type="evidence" value="ECO:0007669"/>
    <property type="project" value="TreeGrafter"/>
</dbReference>
<dbReference type="GO" id="GO:0070402">
    <property type="term" value="F:NADPH binding"/>
    <property type="evidence" value="ECO:0007669"/>
    <property type="project" value="InterPro"/>
</dbReference>
<dbReference type="GO" id="GO:0051484">
    <property type="term" value="P:isopentenyl diphosphate biosynthetic process, methylerythritol 4-phosphate pathway involved in terpenoid biosynthetic process"/>
    <property type="evidence" value="ECO:0007669"/>
    <property type="project" value="TreeGrafter"/>
</dbReference>
<dbReference type="FunFam" id="3.40.50.720:FF:000045">
    <property type="entry name" value="1-deoxy-D-xylulose 5-phosphate reductoisomerase"/>
    <property type="match status" value="1"/>
</dbReference>
<dbReference type="Gene3D" id="1.10.1740.10">
    <property type="match status" value="1"/>
</dbReference>
<dbReference type="Gene3D" id="3.40.50.720">
    <property type="entry name" value="NAD(P)-binding Rossmann-like Domain"/>
    <property type="match status" value="1"/>
</dbReference>
<dbReference type="HAMAP" id="MF_00183">
    <property type="entry name" value="DXP_reductoisom"/>
    <property type="match status" value="1"/>
</dbReference>
<dbReference type="InterPro" id="IPR003821">
    <property type="entry name" value="DXP_reductoisomerase"/>
</dbReference>
<dbReference type="InterPro" id="IPR013644">
    <property type="entry name" value="DXP_reductoisomerase_C"/>
</dbReference>
<dbReference type="InterPro" id="IPR013512">
    <property type="entry name" value="DXP_reductoisomerase_N"/>
</dbReference>
<dbReference type="InterPro" id="IPR026877">
    <property type="entry name" value="DXPR_C"/>
</dbReference>
<dbReference type="InterPro" id="IPR036169">
    <property type="entry name" value="DXPR_C_sf"/>
</dbReference>
<dbReference type="InterPro" id="IPR036291">
    <property type="entry name" value="NAD(P)-bd_dom_sf"/>
</dbReference>
<dbReference type="NCBIfam" id="TIGR00243">
    <property type="entry name" value="Dxr"/>
    <property type="match status" value="1"/>
</dbReference>
<dbReference type="PANTHER" id="PTHR30525">
    <property type="entry name" value="1-DEOXY-D-XYLULOSE 5-PHOSPHATE REDUCTOISOMERASE"/>
    <property type="match status" value="1"/>
</dbReference>
<dbReference type="PANTHER" id="PTHR30525:SF0">
    <property type="entry name" value="1-DEOXY-D-XYLULOSE 5-PHOSPHATE REDUCTOISOMERASE, CHLOROPLASTIC"/>
    <property type="match status" value="1"/>
</dbReference>
<dbReference type="Pfam" id="PF08436">
    <property type="entry name" value="DXP_redisom_C"/>
    <property type="match status" value="1"/>
</dbReference>
<dbReference type="Pfam" id="PF02670">
    <property type="entry name" value="DXP_reductoisom"/>
    <property type="match status" value="1"/>
</dbReference>
<dbReference type="Pfam" id="PF13288">
    <property type="entry name" value="DXPR_C"/>
    <property type="match status" value="1"/>
</dbReference>
<dbReference type="PIRSF" id="PIRSF006205">
    <property type="entry name" value="Dxp_reductismrs"/>
    <property type="match status" value="1"/>
</dbReference>
<dbReference type="SUPFAM" id="SSF69055">
    <property type="entry name" value="1-deoxy-D-xylulose-5-phosphate reductoisomerase, C-terminal domain"/>
    <property type="match status" value="1"/>
</dbReference>
<dbReference type="SUPFAM" id="SSF55347">
    <property type="entry name" value="Glyceraldehyde-3-phosphate dehydrogenase-like, C-terminal domain"/>
    <property type="match status" value="1"/>
</dbReference>
<dbReference type="SUPFAM" id="SSF51735">
    <property type="entry name" value="NAD(P)-binding Rossmann-fold domains"/>
    <property type="match status" value="1"/>
</dbReference>
<accession>B9KRU3</accession>
<reference key="1">
    <citation type="journal article" date="2009" name="J. Bacteriol.">
        <title>Complete genome sequence of Rhodobacter sphaeroides KD131.</title>
        <authorList>
            <person name="Lim S.-K."/>
            <person name="Kim S.J."/>
            <person name="Cha S.H."/>
            <person name="Oh Y.-K."/>
            <person name="Rhee H.-J."/>
            <person name="Kim M.-S."/>
            <person name="Lee J.K."/>
        </authorList>
    </citation>
    <scope>NUCLEOTIDE SEQUENCE [LARGE SCALE GENOMIC DNA]</scope>
    <source>
        <strain>KD131 / KCTC 12085</strain>
    </source>
</reference>
<sequence length="394" mass="41908">MRSLSIFGATGSIGESTFDLVMRKGGPEAFRTVALTGGRNIRRLAEMARALKAELAVTAHEDCLPALREALAGTGTEVAGGAQAIAEAADRPADWTMSAIVGAAGLVPGMRALKHGRTLALANKESLVTAGQLLMRTAQENGATILPVDSEHSAVFQALAGEDTACVERVIITASGGPFRDWSLERIRACTVAEAQAHPNWSMGQRISIDSASMFNKALELIETREFFGFEPDRIEAVVHPQSIVHAMVGFCDGGLMAHLGPADMRHAIGFALNWPGRGEVPVARIDLAQIASLTFQKPDEERFPALRLARDVMAARGLSGAAFNAAKEIALDHFIAGRIGFLDMAAVVEETLAGVSTDPLFGKVPDALEEVLAMDHLARRAAEEAAGLRQQKR</sequence>
<protein>
    <recommendedName>
        <fullName evidence="1">1-deoxy-D-xylulose 5-phosphate reductoisomerase</fullName>
        <shortName evidence="1">DXP reductoisomerase</shortName>
        <ecNumber evidence="1">1.1.1.267</ecNumber>
    </recommendedName>
    <alternativeName>
        <fullName evidence="1">1-deoxyxylulose-5-phosphate reductoisomerase</fullName>
    </alternativeName>
    <alternativeName>
        <fullName evidence="1">2-C-methyl-D-erythritol 4-phosphate synthase</fullName>
    </alternativeName>
</protein>
<proteinExistence type="inferred from homology"/>
<keyword id="KW-0414">Isoprene biosynthesis</keyword>
<keyword id="KW-0464">Manganese</keyword>
<keyword id="KW-0479">Metal-binding</keyword>
<keyword id="KW-0521">NADP</keyword>
<keyword id="KW-0560">Oxidoreductase</keyword>
<organism>
    <name type="scientific">Cereibacter sphaeroides (strain KD131 / KCTC 12085)</name>
    <name type="common">Rhodobacter sphaeroides</name>
    <dbReference type="NCBI Taxonomy" id="557760"/>
    <lineage>
        <taxon>Bacteria</taxon>
        <taxon>Pseudomonadati</taxon>
        <taxon>Pseudomonadota</taxon>
        <taxon>Alphaproteobacteria</taxon>
        <taxon>Rhodobacterales</taxon>
        <taxon>Paracoccaceae</taxon>
        <taxon>Cereibacter</taxon>
    </lineage>
</organism>
<comment type="function">
    <text evidence="1">Catalyzes the NADPH-dependent rearrangement and reduction of 1-deoxy-D-xylulose-5-phosphate (DXP) to 2-C-methyl-D-erythritol 4-phosphate (MEP).</text>
</comment>
<comment type="catalytic activity">
    <reaction evidence="1">
        <text>2-C-methyl-D-erythritol 4-phosphate + NADP(+) = 1-deoxy-D-xylulose 5-phosphate + NADPH + H(+)</text>
        <dbReference type="Rhea" id="RHEA:13717"/>
        <dbReference type="ChEBI" id="CHEBI:15378"/>
        <dbReference type="ChEBI" id="CHEBI:57783"/>
        <dbReference type="ChEBI" id="CHEBI:57792"/>
        <dbReference type="ChEBI" id="CHEBI:58262"/>
        <dbReference type="ChEBI" id="CHEBI:58349"/>
        <dbReference type="EC" id="1.1.1.267"/>
    </reaction>
    <physiologicalReaction direction="right-to-left" evidence="1">
        <dbReference type="Rhea" id="RHEA:13719"/>
    </physiologicalReaction>
</comment>
<comment type="cofactor">
    <cofactor evidence="1">
        <name>Mg(2+)</name>
        <dbReference type="ChEBI" id="CHEBI:18420"/>
    </cofactor>
    <cofactor evidence="1">
        <name>Mn(2+)</name>
        <dbReference type="ChEBI" id="CHEBI:29035"/>
    </cofactor>
</comment>
<comment type="pathway">
    <text evidence="1">Isoprenoid biosynthesis; isopentenyl diphosphate biosynthesis via DXP pathway; isopentenyl diphosphate from 1-deoxy-D-xylulose 5-phosphate: step 1/6.</text>
</comment>
<comment type="similarity">
    <text evidence="1">Belongs to the DXR family.</text>
</comment>